<accession>P61898</accession>
<accession>P21377</accession>
<name>NGFV_NAJAT</name>
<organism>
    <name type="scientific">Naja atra</name>
    <name type="common">Chinese cobra</name>
    <dbReference type="NCBI Taxonomy" id="8656"/>
    <lineage>
        <taxon>Eukaryota</taxon>
        <taxon>Metazoa</taxon>
        <taxon>Chordata</taxon>
        <taxon>Craniata</taxon>
        <taxon>Vertebrata</taxon>
        <taxon>Euteleostomi</taxon>
        <taxon>Lepidosauria</taxon>
        <taxon>Squamata</taxon>
        <taxon>Bifurcata</taxon>
        <taxon>Unidentata</taxon>
        <taxon>Episquamata</taxon>
        <taxon>Toxicofera</taxon>
        <taxon>Serpentes</taxon>
        <taxon>Colubroidea</taxon>
        <taxon>Elapidae</taxon>
        <taxon>Elapinae</taxon>
        <taxon>Naja</taxon>
    </lineage>
</organism>
<feature type="chain" id="PRO_0000159605" description="Venom nerve growth factor" evidence="5">
    <location>
        <begin position="1"/>
        <end position="116"/>
    </location>
</feature>
<feature type="binding site" evidence="4 12">
    <location>
        <position position="86"/>
    </location>
    <ligand>
        <name>a 1,2-diacyl-sn-glycerol</name>
        <dbReference type="ChEBI" id="CHEBI:17815"/>
    </ligand>
</feature>
<feature type="disulfide bond" evidence="4 12">
    <location>
        <begin position="14"/>
        <end position="78"/>
    </location>
</feature>
<feature type="disulfide bond" evidence="4 12">
    <location>
        <begin position="56"/>
        <end position="106"/>
    </location>
</feature>
<feature type="disulfide bond" evidence="4 12">
    <location>
        <begin position="66"/>
        <end position="108"/>
    </location>
</feature>
<feature type="strand" evidence="13">
    <location>
        <begin position="11"/>
        <end position="14"/>
    </location>
</feature>
<feature type="strand" evidence="13">
    <location>
        <begin position="16"/>
        <end position="21"/>
    </location>
</feature>
<feature type="strand" evidence="13">
    <location>
        <begin position="24"/>
        <end position="28"/>
    </location>
</feature>
<feature type="strand" evidence="13">
    <location>
        <begin position="33"/>
        <end position="36"/>
    </location>
</feature>
<feature type="strand" evidence="13">
    <location>
        <begin position="38"/>
        <end position="42"/>
    </location>
</feature>
<feature type="strand" evidence="13">
    <location>
        <begin position="45"/>
        <end position="48"/>
    </location>
</feature>
<feature type="strand" evidence="13">
    <location>
        <begin position="51"/>
        <end position="57"/>
    </location>
</feature>
<feature type="turn" evidence="13">
    <location>
        <begin position="71"/>
        <end position="73"/>
    </location>
</feature>
<feature type="strand" evidence="13">
    <location>
        <begin position="74"/>
        <end position="91"/>
    </location>
</feature>
<feature type="strand" evidence="13">
    <location>
        <begin position="94"/>
        <end position="112"/>
    </location>
</feature>
<proteinExistence type="evidence at protein level"/>
<comment type="function">
    <text evidence="1 4">Nerve growth factor is important for the development and maintenance of the sympathetic and sensory nervous systems. It stimulates division and differentiation of sympathetic and embryonic sensory neurons as well as basal forebrain cholinergic neurons in the brain. Its relevance in the snake venom is not clear. However, it has been shown to inhibit metalloproteinase-dependent proteolysis of platelet glycoprotein Ib alpha, suggesting a metalloproteinase inhibition to prevent metalloprotease autodigestion and/or protection against prey proteases (By similarity). Binds a lipid between the two protein chains in the homodimer. The lipid-bound form promotes histamine relase from mouse mast cells, contrary to the lipid-free form (PubMed:22649032).</text>
</comment>
<comment type="subunit">
    <text evidence="2 4">Homodimer; non-covalently linked (PubMed:1002678, PubMed:22649032). Interacts with NTRK1 (PubMed:22649032).</text>
</comment>
<comment type="subcellular location">
    <subcellularLocation>
        <location evidence="2">Secreted</location>
    </subcellularLocation>
</comment>
<comment type="tissue specificity">
    <text evidence="11">Expressed by the venom gland.</text>
</comment>
<comment type="PTM">
    <text evidence="3">Not glycosylated.</text>
</comment>
<comment type="similarity">
    <text evidence="10">Belongs to the NGF-beta family.</text>
</comment>
<protein>
    <recommendedName>
        <fullName evidence="6 7 9">Venom nerve growth factor</fullName>
        <shortName>v-NGF</shortName>
        <shortName>vNGF</shortName>
    </recommendedName>
    <alternativeName>
        <fullName evidence="8">Cobra nerve growth factor</fullName>
        <shortName evidence="8">cNGF</shortName>
    </alternativeName>
</protein>
<sequence>EDHPVHNLGEHSVCDSVSAWVTKTTATDIKGNTVTVMENVNLDNKVYKEYFFETKCKNPNPEPSGCRGIDSSHWNSYCTETDTFIKALTMEGNQASWRFIRIETACVCVITKKKGN</sequence>
<keyword id="KW-0002">3D-structure</keyword>
<keyword id="KW-0903">Direct protein sequencing</keyword>
<keyword id="KW-1015">Disulfide bond</keyword>
<keyword id="KW-0339">Growth factor</keyword>
<keyword id="KW-0446">Lipid-binding</keyword>
<keyword id="KW-0481">Metalloenzyme inhibitor</keyword>
<keyword id="KW-0483">Metalloprotease inhibitor</keyword>
<keyword id="KW-0646">Protease inhibitor</keyword>
<keyword id="KW-0964">Secreted</keyword>
<keyword id="KW-0800">Toxin</keyword>
<evidence type="ECO:0000250" key="1">
    <source>
        <dbReference type="UniProtKB" id="P61899"/>
    </source>
</evidence>
<evidence type="ECO:0000269" key="2">
    <source>
    </source>
</evidence>
<evidence type="ECO:0000269" key="3">
    <source>
    </source>
</evidence>
<evidence type="ECO:0000269" key="4">
    <source>
    </source>
</evidence>
<evidence type="ECO:0000269" key="5">
    <source>
    </source>
</evidence>
<evidence type="ECO:0000303" key="6">
    <source>
    </source>
</evidence>
<evidence type="ECO:0000303" key="7">
    <source>
    </source>
</evidence>
<evidence type="ECO:0000303" key="8">
    <source>
    </source>
</evidence>
<evidence type="ECO:0000303" key="9">
    <source>
    </source>
</evidence>
<evidence type="ECO:0000305" key="10"/>
<evidence type="ECO:0000305" key="11">
    <source>
    </source>
</evidence>
<evidence type="ECO:0007744" key="12">
    <source>
        <dbReference type="PDB" id="4EC7"/>
    </source>
</evidence>
<evidence type="ECO:0007829" key="13">
    <source>
        <dbReference type="PDB" id="4EC7"/>
    </source>
</evidence>
<dbReference type="PIR" id="A58566">
    <property type="entry name" value="A58566"/>
</dbReference>
<dbReference type="PDB" id="4EC7">
    <property type="method" value="X-ray"/>
    <property type="resolution" value="2.60 A"/>
    <property type="chains" value="A/B=1-116"/>
</dbReference>
<dbReference type="PDBsum" id="4EC7"/>
<dbReference type="SMR" id="P61898"/>
<dbReference type="EvolutionaryTrace" id="P61898"/>
<dbReference type="GO" id="GO:0030424">
    <property type="term" value="C:axon"/>
    <property type="evidence" value="ECO:0007669"/>
    <property type="project" value="TreeGrafter"/>
</dbReference>
<dbReference type="GO" id="GO:0030425">
    <property type="term" value="C:dendrite"/>
    <property type="evidence" value="ECO:0007669"/>
    <property type="project" value="TreeGrafter"/>
</dbReference>
<dbReference type="GO" id="GO:0005615">
    <property type="term" value="C:extracellular space"/>
    <property type="evidence" value="ECO:0007669"/>
    <property type="project" value="TreeGrafter"/>
</dbReference>
<dbReference type="GO" id="GO:0008021">
    <property type="term" value="C:synaptic vesicle"/>
    <property type="evidence" value="ECO:0007669"/>
    <property type="project" value="TreeGrafter"/>
</dbReference>
<dbReference type="GO" id="GO:0008083">
    <property type="term" value="F:growth factor activity"/>
    <property type="evidence" value="ECO:0007669"/>
    <property type="project" value="UniProtKB-KW"/>
</dbReference>
<dbReference type="GO" id="GO:0008289">
    <property type="term" value="F:lipid binding"/>
    <property type="evidence" value="ECO:0007669"/>
    <property type="project" value="UniProtKB-KW"/>
</dbReference>
<dbReference type="GO" id="GO:0008191">
    <property type="term" value="F:metalloendopeptidase inhibitor activity"/>
    <property type="evidence" value="ECO:0000250"/>
    <property type="project" value="UniProtKB"/>
</dbReference>
<dbReference type="GO" id="GO:0005163">
    <property type="term" value="F:nerve growth factor receptor binding"/>
    <property type="evidence" value="ECO:0007669"/>
    <property type="project" value="TreeGrafter"/>
</dbReference>
<dbReference type="GO" id="GO:0090729">
    <property type="term" value="F:toxin activity"/>
    <property type="evidence" value="ECO:0007669"/>
    <property type="project" value="UniProtKB-KW"/>
</dbReference>
<dbReference type="GO" id="GO:0007169">
    <property type="term" value="P:cell surface receptor protein tyrosine kinase signaling pathway"/>
    <property type="evidence" value="ECO:0007669"/>
    <property type="project" value="TreeGrafter"/>
</dbReference>
<dbReference type="GO" id="GO:0050804">
    <property type="term" value="P:modulation of chemical synaptic transmission"/>
    <property type="evidence" value="ECO:0007669"/>
    <property type="project" value="TreeGrafter"/>
</dbReference>
<dbReference type="GO" id="GO:0043524">
    <property type="term" value="P:negative regulation of neuron apoptotic process"/>
    <property type="evidence" value="ECO:0007669"/>
    <property type="project" value="TreeGrafter"/>
</dbReference>
<dbReference type="GO" id="GO:0021675">
    <property type="term" value="P:nerve development"/>
    <property type="evidence" value="ECO:0007669"/>
    <property type="project" value="TreeGrafter"/>
</dbReference>
<dbReference type="GO" id="GO:0038180">
    <property type="term" value="P:nerve growth factor signaling pathway"/>
    <property type="evidence" value="ECO:0007669"/>
    <property type="project" value="TreeGrafter"/>
</dbReference>
<dbReference type="GO" id="GO:0048812">
    <property type="term" value="P:neuron projection morphogenesis"/>
    <property type="evidence" value="ECO:0007669"/>
    <property type="project" value="TreeGrafter"/>
</dbReference>
<dbReference type="FunFam" id="2.10.90.10:FF:000002">
    <property type="entry name" value="Brain-derived neurotrophic factor"/>
    <property type="match status" value="1"/>
</dbReference>
<dbReference type="Gene3D" id="2.10.90.10">
    <property type="entry name" value="Cystine-knot cytokines"/>
    <property type="match status" value="1"/>
</dbReference>
<dbReference type="InterPro" id="IPR029034">
    <property type="entry name" value="Cystine-knot_cytokine"/>
</dbReference>
<dbReference type="InterPro" id="IPR020408">
    <property type="entry name" value="Nerve_growth_factor-like"/>
</dbReference>
<dbReference type="InterPro" id="IPR002072">
    <property type="entry name" value="Nerve_growth_factor-rel"/>
</dbReference>
<dbReference type="InterPro" id="IPR020425">
    <property type="entry name" value="Nerve_growth_factor_bsu"/>
</dbReference>
<dbReference type="InterPro" id="IPR019846">
    <property type="entry name" value="Nerve_growth_factor_CS"/>
</dbReference>
<dbReference type="PANTHER" id="PTHR11589:SF10">
    <property type="entry name" value="BETA-NERVE GROWTH FACTOR"/>
    <property type="match status" value="1"/>
</dbReference>
<dbReference type="PANTHER" id="PTHR11589">
    <property type="entry name" value="NERVE GROWTH FACTOR NGF -RELATED"/>
    <property type="match status" value="1"/>
</dbReference>
<dbReference type="Pfam" id="PF00243">
    <property type="entry name" value="NGF"/>
    <property type="match status" value="1"/>
</dbReference>
<dbReference type="PRINTS" id="PR00268">
    <property type="entry name" value="NGF"/>
</dbReference>
<dbReference type="PRINTS" id="PR01913">
    <property type="entry name" value="NGFBETA"/>
</dbReference>
<dbReference type="SMART" id="SM00140">
    <property type="entry name" value="NGF"/>
    <property type="match status" value="1"/>
</dbReference>
<dbReference type="SUPFAM" id="SSF57501">
    <property type="entry name" value="Cystine-knot cytokines"/>
    <property type="match status" value="1"/>
</dbReference>
<dbReference type="PROSITE" id="PS00248">
    <property type="entry name" value="NGF_1"/>
    <property type="match status" value="1"/>
</dbReference>
<dbReference type="PROSITE" id="PS50270">
    <property type="entry name" value="NGF_2"/>
    <property type="match status" value="1"/>
</dbReference>
<reference key="1">
    <citation type="journal article" date="1989" name="Biochem. Int.">
        <title>Amino acid sequence of nerve growth factor purified from the venom of the Formosan cobra Naja naja atra.</title>
        <authorList>
            <person name="Oda T."/>
            <person name="Ohta M."/>
            <person name="Inoue S."/>
            <person name="Ikeda K."/>
            <person name="Furukawa S."/>
            <person name="Hayashi K."/>
        </authorList>
    </citation>
    <scope>PROTEIN SEQUENCE</scope>
    <source>
        <tissue>Venom</tissue>
    </source>
</reference>
<reference key="2">
    <citation type="journal article" date="1976" name="J. Biochem.">
        <title>Isolation and characterization of nerve growth factor from the venom of Naja naja atra.</title>
        <authorList>
            <person name="Furukawa S."/>
            <person name="Hayashi K."/>
        </authorList>
    </citation>
    <scope>SUBUNIT</scope>
    <scope>SUBCELLULAR LOCATION</scope>
    <source>
        <tissue>Venom</tissue>
    </source>
</reference>
<reference key="3">
    <citation type="journal article" date="2011" name="Toxicon">
        <title>Molecular diversity of snake venom nerve growth factors.</title>
        <authorList>
            <person name="Trummal K."/>
            <person name="Tonismagi K."/>
            <person name="Paalme V."/>
            <person name="Jarvekulg L."/>
            <person name="Siigur J."/>
            <person name="Siigur E."/>
        </authorList>
    </citation>
    <scope>CHARACTERIZATION</scope>
    <source>
        <tissue>Venom</tissue>
    </source>
</reference>
<reference evidence="12" key="4">
    <citation type="journal article" date="2012" name="FASEB J.">
        <title>Structural and functional insights into lipid-bound nerve growth factors.</title>
        <authorList>
            <person name="Tong Q."/>
            <person name="Wang F."/>
            <person name="Zhou H.Z."/>
            <person name="Sun H.L."/>
            <person name="Song H."/>
            <person name="Shu Y.Y."/>
            <person name="Gong Y."/>
            <person name="Zhang W.T."/>
            <person name="Cai T.X."/>
            <person name="Yang F.Q."/>
            <person name="Tang J."/>
            <person name="Jiang T."/>
        </authorList>
    </citation>
    <scope>X-RAY CRYSTALLOGRAPHY (2.60 ANGSTROMS) OF HOMODIMER IN COMPLEX WITH A 1,2-DIACYL-SN-GLYCEROL</scope>
    <scope>INTERACTION WITH NTRK1</scope>
    <scope>FUNCTION</scope>
    <scope>LIPID-BINDING</scope>
    <scope>SUBCELLULAR LOCATION</scope>
    <scope>SUBUNIT</scope>
    <scope>DISULFIDE BONDS</scope>
    <source>
        <tissue>Venom</tissue>
    </source>
</reference>